<keyword id="KW-0028">Amino-acid biosynthesis</keyword>
<keyword id="KW-0963">Cytoplasm</keyword>
<keyword id="KW-0368">Histidine biosynthesis</keyword>
<keyword id="KW-0456">Lyase</keyword>
<keyword id="KW-1185">Reference proteome</keyword>
<feature type="chain" id="PRO_0000142278" description="Imidazole glycerol phosphate synthase subunit HisF">
    <location>
        <begin position="1"/>
        <end position="273"/>
    </location>
</feature>
<feature type="active site" evidence="1">
    <location>
        <position position="11"/>
    </location>
</feature>
<feature type="active site" evidence="1">
    <location>
        <position position="134"/>
    </location>
</feature>
<dbReference type="EC" id="4.3.2.10" evidence="1"/>
<dbReference type="EMBL" id="AE010299">
    <property type="protein sequence ID" value="AAM03985.1"/>
    <property type="molecule type" value="Genomic_DNA"/>
</dbReference>
<dbReference type="RefSeq" id="WP_011020590.1">
    <property type="nucleotide sequence ID" value="NC_003552.1"/>
</dbReference>
<dbReference type="SMR" id="Q8TT96"/>
<dbReference type="FunCoup" id="Q8TT96">
    <property type="interactions" value="199"/>
</dbReference>
<dbReference type="STRING" id="188937.MA_0541"/>
<dbReference type="EnsemblBacteria" id="AAM03985">
    <property type="protein sequence ID" value="AAM03985"/>
    <property type="gene ID" value="MA_0541"/>
</dbReference>
<dbReference type="GeneID" id="1472433"/>
<dbReference type="KEGG" id="mac:MA_0541"/>
<dbReference type="HOGENOM" id="CLU_048577_4_0_2"/>
<dbReference type="InParanoid" id="Q8TT96"/>
<dbReference type="OrthoDB" id="6261at2157"/>
<dbReference type="PhylomeDB" id="Q8TT96"/>
<dbReference type="UniPathway" id="UPA00031">
    <property type="reaction ID" value="UER00010"/>
</dbReference>
<dbReference type="Proteomes" id="UP000002487">
    <property type="component" value="Chromosome"/>
</dbReference>
<dbReference type="GO" id="GO:0005737">
    <property type="term" value="C:cytoplasm"/>
    <property type="evidence" value="ECO:0007669"/>
    <property type="project" value="UniProtKB-SubCell"/>
</dbReference>
<dbReference type="GO" id="GO:0000107">
    <property type="term" value="F:imidazoleglycerol-phosphate synthase activity"/>
    <property type="evidence" value="ECO:0000318"/>
    <property type="project" value="GO_Central"/>
</dbReference>
<dbReference type="GO" id="GO:0016829">
    <property type="term" value="F:lyase activity"/>
    <property type="evidence" value="ECO:0007669"/>
    <property type="project" value="UniProtKB-KW"/>
</dbReference>
<dbReference type="GO" id="GO:0000105">
    <property type="term" value="P:L-histidine biosynthetic process"/>
    <property type="evidence" value="ECO:0007669"/>
    <property type="project" value="UniProtKB-UniRule"/>
</dbReference>
<dbReference type="CDD" id="cd04731">
    <property type="entry name" value="HisF"/>
    <property type="match status" value="1"/>
</dbReference>
<dbReference type="FunFam" id="3.20.20.70:FF:000006">
    <property type="entry name" value="Imidazole glycerol phosphate synthase subunit HisF"/>
    <property type="match status" value="1"/>
</dbReference>
<dbReference type="Gene3D" id="3.20.20.70">
    <property type="entry name" value="Aldolase class I"/>
    <property type="match status" value="1"/>
</dbReference>
<dbReference type="HAMAP" id="MF_01013">
    <property type="entry name" value="HisF"/>
    <property type="match status" value="1"/>
</dbReference>
<dbReference type="InterPro" id="IPR013785">
    <property type="entry name" value="Aldolase_TIM"/>
</dbReference>
<dbReference type="InterPro" id="IPR006062">
    <property type="entry name" value="His_biosynth"/>
</dbReference>
<dbReference type="InterPro" id="IPR004651">
    <property type="entry name" value="HisF"/>
</dbReference>
<dbReference type="InterPro" id="IPR050064">
    <property type="entry name" value="IGPS_HisA/HisF"/>
</dbReference>
<dbReference type="InterPro" id="IPR011060">
    <property type="entry name" value="RibuloseP-bd_barrel"/>
</dbReference>
<dbReference type="NCBIfam" id="TIGR00735">
    <property type="entry name" value="hisF"/>
    <property type="match status" value="1"/>
</dbReference>
<dbReference type="PANTHER" id="PTHR21235:SF2">
    <property type="entry name" value="IMIDAZOLE GLYCEROL PHOSPHATE SYNTHASE HISHF"/>
    <property type="match status" value="1"/>
</dbReference>
<dbReference type="PANTHER" id="PTHR21235">
    <property type="entry name" value="IMIDAZOLE GLYCEROL PHOSPHATE SYNTHASE SUBUNIT HISF/H IGP SYNTHASE SUBUNIT HISF/H"/>
    <property type="match status" value="1"/>
</dbReference>
<dbReference type="Pfam" id="PF00977">
    <property type="entry name" value="His_biosynth"/>
    <property type="match status" value="1"/>
</dbReference>
<dbReference type="SUPFAM" id="SSF51366">
    <property type="entry name" value="Ribulose-phoshate binding barrel"/>
    <property type="match status" value="1"/>
</dbReference>
<protein>
    <recommendedName>
        <fullName evidence="1">Imidazole glycerol phosphate synthase subunit HisF</fullName>
        <ecNumber evidence="1">4.3.2.10</ecNumber>
    </recommendedName>
    <alternativeName>
        <fullName evidence="1">IGP synthase cyclase subunit</fullName>
    </alternativeName>
    <alternativeName>
        <fullName evidence="1">IGP synthase subunit HisF</fullName>
    </alternativeName>
    <alternativeName>
        <fullName evidence="1">ImGP synthase subunit HisF</fullName>
        <shortName evidence="1">IGPS subunit HisF</shortName>
    </alternativeName>
</protein>
<name>HIS6_METAC</name>
<sequence>MLTKRIIPCLDVTLDRAGGCVVKGVEFVDLKEAGDPVELAKRYNEDGADELVFLDITASAHGRETMIDVIERTADEVFIPLTVGGGISSIDAIRQILRAGADKVSVNTSAVKNPDFIKESSDIFGAQCIVTAIDCRRNTDIKNNPDKTVLELEDGTPAWYEVVIYGGREATGIDAVQWAKKAEELGSGEILLTSMDRDGTCAGYDLPITRKLSEELDIPIIASGGVGNPQHIYEGFSEGKADAALAASIFHFSEYSIWEVKEYLREREIPVRL</sequence>
<evidence type="ECO:0000255" key="1">
    <source>
        <dbReference type="HAMAP-Rule" id="MF_01013"/>
    </source>
</evidence>
<comment type="function">
    <text evidence="1">IGPS catalyzes the conversion of PRFAR and glutamine to IGP, AICAR and glutamate. The HisF subunit catalyzes the cyclization activity that produces IGP and AICAR from PRFAR using the ammonia provided by the HisH subunit.</text>
</comment>
<comment type="catalytic activity">
    <reaction evidence="1">
        <text>5-[(5-phospho-1-deoxy-D-ribulos-1-ylimino)methylamino]-1-(5-phospho-beta-D-ribosyl)imidazole-4-carboxamide + L-glutamine = D-erythro-1-(imidazol-4-yl)glycerol 3-phosphate + 5-amino-1-(5-phospho-beta-D-ribosyl)imidazole-4-carboxamide + L-glutamate + H(+)</text>
        <dbReference type="Rhea" id="RHEA:24793"/>
        <dbReference type="ChEBI" id="CHEBI:15378"/>
        <dbReference type="ChEBI" id="CHEBI:29985"/>
        <dbReference type="ChEBI" id="CHEBI:58278"/>
        <dbReference type="ChEBI" id="CHEBI:58359"/>
        <dbReference type="ChEBI" id="CHEBI:58475"/>
        <dbReference type="ChEBI" id="CHEBI:58525"/>
        <dbReference type="EC" id="4.3.2.10"/>
    </reaction>
</comment>
<comment type="pathway">
    <text evidence="1">Amino-acid biosynthesis; L-histidine biosynthesis; L-histidine from 5-phospho-alpha-D-ribose 1-diphosphate: step 5/9.</text>
</comment>
<comment type="subunit">
    <text evidence="1">Heterodimer of HisH and HisF.</text>
</comment>
<comment type="subcellular location">
    <subcellularLocation>
        <location evidence="1">Cytoplasm</location>
    </subcellularLocation>
</comment>
<comment type="similarity">
    <text evidence="1">Belongs to the HisA/HisF family.</text>
</comment>
<proteinExistence type="inferred from homology"/>
<reference key="1">
    <citation type="journal article" date="2002" name="Genome Res.">
        <title>The genome of Methanosarcina acetivorans reveals extensive metabolic and physiological diversity.</title>
        <authorList>
            <person name="Galagan J.E."/>
            <person name="Nusbaum C."/>
            <person name="Roy A."/>
            <person name="Endrizzi M.G."/>
            <person name="Macdonald P."/>
            <person name="FitzHugh W."/>
            <person name="Calvo S."/>
            <person name="Engels R."/>
            <person name="Smirnov S."/>
            <person name="Atnoor D."/>
            <person name="Brown A."/>
            <person name="Allen N."/>
            <person name="Naylor J."/>
            <person name="Stange-Thomann N."/>
            <person name="DeArellano K."/>
            <person name="Johnson R."/>
            <person name="Linton L."/>
            <person name="McEwan P."/>
            <person name="McKernan K."/>
            <person name="Talamas J."/>
            <person name="Tirrell A."/>
            <person name="Ye W."/>
            <person name="Zimmer A."/>
            <person name="Barber R.D."/>
            <person name="Cann I."/>
            <person name="Graham D.E."/>
            <person name="Grahame D.A."/>
            <person name="Guss A.M."/>
            <person name="Hedderich R."/>
            <person name="Ingram-Smith C."/>
            <person name="Kuettner H.C."/>
            <person name="Krzycki J.A."/>
            <person name="Leigh J.A."/>
            <person name="Li W."/>
            <person name="Liu J."/>
            <person name="Mukhopadhyay B."/>
            <person name="Reeve J.N."/>
            <person name="Smith K."/>
            <person name="Springer T.A."/>
            <person name="Umayam L.A."/>
            <person name="White O."/>
            <person name="White R.H."/>
            <person name="de Macario E.C."/>
            <person name="Ferry J.G."/>
            <person name="Jarrell K.F."/>
            <person name="Jing H."/>
            <person name="Macario A.J.L."/>
            <person name="Paulsen I.T."/>
            <person name="Pritchett M."/>
            <person name="Sowers K.R."/>
            <person name="Swanson R.V."/>
            <person name="Zinder S.H."/>
            <person name="Lander E."/>
            <person name="Metcalf W.W."/>
            <person name="Birren B."/>
        </authorList>
    </citation>
    <scope>NUCLEOTIDE SEQUENCE [LARGE SCALE GENOMIC DNA]</scope>
    <source>
        <strain>ATCC 35395 / DSM 2834 / JCM 12185 / C2A</strain>
    </source>
</reference>
<gene>
    <name evidence="1" type="primary">hisF</name>
    <name type="ordered locus">MA_0541</name>
</gene>
<accession>Q8TT96</accession>
<organism>
    <name type="scientific">Methanosarcina acetivorans (strain ATCC 35395 / DSM 2834 / JCM 12185 / C2A)</name>
    <dbReference type="NCBI Taxonomy" id="188937"/>
    <lineage>
        <taxon>Archaea</taxon>
        <taxon>Methanobacteriati</taxon>
        <taxon>Methanobacteriota</taxon>
        <taxon>Stenosarchaea group</taxon>
        <taxon>Methanomicrobia</taxon>
        <taxon>Methanosarcinales</taxon>
        <taxon>Methanosarcinaceae</taxon>
        <taxon>Methanosarcina</taxon>
    </lineage>
</organism>